<gene>
    <name type="primary">moaE</name>
    <name type="ordered locus">Synpcc7942_1283</name>
</gene>
<comment type="function">
    <text evidence="1">Converts molybdopterin precursor Z into molybdopterin. This requires the incorporation of two sulfur atoms into precursor Z to generate a dithiolene group. The sulfur is provided by MoaD (By similarity).</text>
</comment>
<comment type="catalytic activity">
    <reaction>
        <text>2 [molybdopterin-synthase sulfur-carrier protein]-C-terminal-Gly-aminoethanethioate + cyclic pyranopterin phosphate + H2O = molybdopterin + 2 [molybdopterin-synthase sulfur-carrier protein]-C-terminal Gly-Gly + 2 H(+)</text>
        <dbReference type="Rhea" id="RHEA:26333"/>
        <dbReference type="Rhea" id="RHEA-COMP:12202"/>
        <dbReference type="Rhea" id="RHEA-COMP:19907"/>
        <dbReference type="ChEBI" id="CHEBI:15377"/>
        <dbReference type="ChEBI" id="CHEBI:15378"/>
        <dbReference type="ChEBI" id="CHEBI:58698"/>
        <dbReference type="ChEBI" id="CHEBI:59648"/>
        <dbReference type="ChEBI" id="CHEBI:90778"/>
        <dbReference type="ChEBI" id="CHEBI:232372"/>
        <dbReference type="EC" id="2.8.1.12"/>
    </reaction>
</comment>
<comment type="pathway">
    <text>Cofactor biosynthesis; molybdopterin biosynthesis.</text>
</comment>
<comment type="subunit">
    <text evidence="1">Heterotetramer of 2 MoaD subunits and 2 MoaE subunits. Also stable as homodimer. The enzyme changes between these two forms during catalysis (By similarity).</text>
</comment>
<comment type="similarity">
    <text evidence="2">Belongs to the MoaE family.</text>
</comment>
<sequence length="165" mass="18712">MPDLLTCDRHQIELSLAPIPLSAAAEFCHDDRYGAFASFVGWVRRVNVGRLVTGITYQSFQPLCRTVLTEICQEAEQVFGQELRIYVQHRLGETRVGDPTVLIGVGAIHRDEACEACRYVIEELKHRAPIWKLEHYEDGDSGWVPGNCLCQERRSRDRRGSTGPE</sequence>
<evidence type="ECO:0000250" key="1"/>
<evidence type="ECO:0000305" key="2"/>
<reference key="1">
    <citation type="journal article" date="1998" name="J. Bacteriol.">
        <title>The narA locus of Synechococcus sp. strain PCC 7942 consists of a cluster of molybdopterin biosynthesis genes.</title>
        <authorList>
            <person name="Rubio L.M."/>
            <person name="Flores E."/>
            <person name="Herrero A."/>
        </authorList>
    </citation>
    <scope>NUCLEOTIDE SEQUENCE [GENOMIC DNA]</scope>
</reference>
<reference key="2">
    <citation type="submission" date="2005-08" db="EMBL/GenBank/DDBJ databases">
        <title>Complete sequence of chromosome 1 of Synechococcus elongatus PCC 7942.</title>
        <authorList>
            <consortium name="US DOE Joint Genome Institute"/>
            <person name="Copeland A."/>
            <person name="Lucas S."/>
            <person name="Lapidus A."/>
            <person name="Barry K."/>
            <person name="Detter J.C."/>
            <person name="Glavina T."/>
            <person name="Hammon N."/>
            <person name="Israni S."/>
            <person name="Pitluck S."/>
            <person name="Schmutz J."/>
            <person name="Larimer F."/>
            <person name="Land M."/>
            <person name="Kyrpides N."/>
            <person name="Lykidis A."/>
            <person name="Golden S."/>
            <person name="Richardson P."/>
        </authorList>
    </citation>
    <scope>NUCLEOTIDE SEQUENCE [LARGE SCALE GENOMIC DNA]</scope>
    <source>
        <strain>ATCC 33912 / PCC 7942 / FACHB-805</strain>
    </source>
</reference>
<protein>
    <recommendedName>
        <fullName>Molybdopterin synthase catalytic subunit</fullName>
        <ecNumber>2.8.1.12</ecNumber>
    </recommendedName>
    <alternativeName>
        <fullName>MPT synthase subunit 2</fullName>
    </alternativeName>
    <alternativeName>
        <fullName>Molybdenum cofactor biosynthesis protein E</fullName>
    </alternativeName>
    <alternativeName>
        <fullName>Molybdopterin-converting factor large subunit</fullName>
    </alternativeName>
    <alternativeName>
        <fullName>Molybdopterin-converting factor subunit 2</fullName>
    </alternativeName>
</protein>
<feature type="chain" id="PRO_0000163106" description="Molybdopterin synthase catalytic subunit">
    <location>
        <begin position="1"/>
        <end position="165"/>
    </location>
</feature>
<feature type="binding site" evidence="1">
    <location>
        <begin position="42"/>
        <end position="44"/>
    </location>
    <ligand>
        <name>substrate</name>
    </ligand>
</feature>
<feature type="binding site" evidence="1">
    <location>
        <begin position="109"/>
        <end position="110"/>
    </location>
    <ligand>
        <name>substrate</name>
    </ligand>
</feature>
<feature type="binding site" evidence="1">
    <location>
        <position position="125"/>
    </location>
    <ligand>
        <name>substrate</name>
    </ligand>
</feature>
<feature type="binding site" evidence="1">
    <location>
        <begin position="132"/>
        <end position="134"/>
    </location>
    <ligand>
        <name>substrate</name>
    </ligand>
</feature>
<dbReference type="EC" id="2.8.1.12"/>
<dbReference type="EMBL" id="X99625">
    <property type="protein sequence ID" value="CAA67947.1"/>
    <property type="molecule type" value="Genomic_DNA"/>
</dbReference>
<dbReference type="EMBL" id="CP000100">
    <property type="protein sequence ID" value="ABB57313.1"/>
    <property type="molecule type" value="Genomic_DNA"/>
</dbReference>
<dbReference type="RefSeq" id="WP_011377957.1">
    <property type="nucleotide sequence ID" value="NZ_JACJTX010000003.1"/>
</dbReference>
<dbReference type="SMR" id="Q56210"/>
<dbReference type="STRING" id="1140.Synpcc7942_1283"/>
<dbReference type="PaxDb" id="1140-Synpcc7942_1283"/>
<dbReference type="KEGG" id="syf:Synpcc7942_1283"/>
<dbReference type="eggNOG" id="COG0314">
    <property type="taxonomic scope" value="Bacteria"/>
</dbReference>
<dbReference type="HOGENOM" id="CLU_089568_1_2_3"/>
<dbReference type="OrthoDB" id="9803224at2"/>
<dbReference type="BioCyc" id="SYNEL:SYNPCC7942_1283-MONOMER"/>
<dbReference type="UniPathway" id="UPA00344"/>
<dbReference type="Proteomes" id="UP000889800">
    <property type="component" value="Chromosome"/>
</dbReference>
<dbReference type="GO" id="GO:0030366">
    <property type="term" value="F:molybdopterin synthase activity"/>
    <property type="evidence" value="ECO:0007669"/>
    <property type="project" value="UniProtKB-EC"/>
</dbReference>
<dbReference type="GO" id="GO:0006777">
    <property type="term" value="P:Mo-molybdopterin cofactor biosynthetic process"/>
    <property type="evidence" value="ECO:0007669"/>
    <property type="project" value="UniProtKB-KW"/>
</dbReference>
<dbReference type="CDD" id="cd00756">
    <property type="entry name" value="MoaE"/>
    <property type="match status" value="1"/>
</dbReference>
<dbReference type="Gene3D" id="3.90.1170.40">
    <property type="entry name" value="Molybdopterin biosynthesis MoaE subunit"/>
    <property type="match status" value="1"/>
</dbReference>
<dbReference type="InterPro" id="IPR036563">
    <property type="entry name" value="MoaE_sf"/>
</dbReference>
<dbReference type="InterPro" id="IPR003448">
    <property type="entry name" value="Mopterin_biosynth_MoaE"/>
</dbReference>
<dbReference type="PANTHER" id="PTHR23404">
    <property type="entry name" value="MOLYBDOPTERIN SYNTHASE RELATED"/>
    <property type="match status" value="1"/>
</dbReference>
<dbReference type="Pfam" id="PF02391">
    <property type="entry name" value="MoaE"/>
    <property type="match status" value="1"/>
</dbReference>
<dbReference type="SUPFAM" id="SSF54690">
    <property type="entry name" value="Molybdopterin synthase subunit MoaE"/>
    <property type="match status" value="1"/>
</dbReference>
<accession>Q56210</accession>
<accession>Q31NQ6</accession>
<proteinExistence type="inferred from homology"/>
<keyword id="KW-0501">Molybdenum cofactor biosynthesis</keyword>
<keyword id="KW-1185">Reference proteome</keyword>
<keyword id="KW-0808">Transferase</keyword>
<name>MOAE_SYNE7</name>
<organism>
    <name type="scientific">Synechococcus elongatus (strain ATCC 33912 / PCC 7942 / FACHB-805)</name>
    <name type="common">Anacystis nidulans R2</name>
    <dbReference type="NCBI Taxonomy" id="1140"/>
    <lineage>
        <taxon>Bacteria</taxon>
        <taxon>Bacillati</taxon>
        <taxon>Cyanobacteriota</taxon>
        <taxon>Cyanophyceae</taxon>
        <taxon>Synechococcales</taxon>
        <taxon>Synechococcaceae</taxon>
        <taxon>Synechococcus</taxon>
    </lineage>
</organism>